<comment type="cofactor">
    <cofactor evidence="1">
        <name>heme</name>
        <dbReference type="ChEBI" id="CHEBI:30413"/>
    </cofactor>
</comment>
<comment type="subcellular location">
    <subcellularLocation>
        <location evidence="3">Membrane</location>
        <topology evidence="3">Single-pass membrane protein</topology>
    </subcellularLocation>
</comment>
<comment type="similarity">
    <text evidence="3">Belongs to the cytochrome P450 family.</text>
</comment>
<organism>
    <name type="scientific">Dictyostelium discoideum</name>
    <name type="common">Social amoeba</name>
    <dbReference type="NCBI Taxonomy" id="44689"/>
    <lineage>
        <taxon>Eukaryota</taxon>
        <taxon>Amoebozoa</taxon>
        <taxon>Evosea</taxon>
        <taxon>Eumycetozoa</taxon>
        <taxon>Dictyostelia</taxon>
        <taxon>Dictyosteliales</taxon>
        <taxon>Dictyosteliaceae</taxon>
        <taxon>Dictyostelium</taxon>
    </lineage>
</organism>
<keyword id="KW-0349">Heme</keyword>
<keyword id="KW-0408">Iron</keyword>
<keyword id="KW-0472">Membrane</keyword>
<keyword id="KW-0479">Metal-binding</keyword>
<keyword id="KW-0503">Monooxygenase</keyword>
<keyword id="KW-0560">Oxidoreductase</keyword>
<keyword id="KW-1185">Reference proteome</keyword>
<keyword id="KW-0812">Transmembrane</keyword>
<keyword id="KW-1133">Transmembrane helix</keyword>
<sequence length="494" mass="57390">MSILIILIISIIFYLIFDFLYKNFSNRQFKGPLALPLVGSLLHLKDDTHLVFQNDSKLYKDGDNNGKIIKYWFCDQLTLAIYDTNTMKEIYLKNPESLNTRVKSPSTNVIGNRFRGIVTADENYWQFHRDILMKSFTGRKVKSLSSSIEKETIDLITYMKFIEKSGQSFSPRSNFMNFYSNIIFDYVFSRRIENIYEGVNEEQGKVLLAIRELFDYLADTLIVNYLIFTKPFYFLYLKMFGHPADSLKKILTKYYLEHSESIDLNNARDVLDSLIIEYRKVGGKEEQSSIIPMVNELILAGTETNSSTAEWFILTMVNNLDYQDKIYNELKSTLETTTAMIKLSNRNQTPLFNAALKEVLRLYPPVPFGVPRQVNQSFEINGGSLKIPKGTQIIQSLYSIFRDENYWDSPDQFKPERFLDQDSHSNNYFPYGIGVKNCIGMGFSQDELYISLSNLVLNFKLLPLIENSKICDKPIFGFSFKPNEFKINLEKRNN</sequence>
<accession>Q54ZM4</accession>
<accession>Q76NT7</accession>
<evidence type="ECO:0000250" key="1"/>
<evidence type="ECO:0000255" key="2"/>
<evidence type="ECO:0000305" key="3"/>
<reference key="1">
    <citation type="journal article" date="2002" name="Nature">
        <title>Sequence and analysis of chromosome 2 of Dictyostelium discoideum.</title>
        <authorList>
            <person name="Gloeckner G."/>
            <person name="Eichinger L."/>
            <person name="Szafranski K."/>
            <person name="Pachebat J.A."/>
            <person name="Bankier A.T."/>
            <person name="Dear P.H."/>
            <person name="Lehmann R."/>
            <person name="Baumgart C."/>
            <person name="Parra G."/>
            <person name="Abril J.F."/>
            <person name="Guigo R."/>
            <person name="Kumpf K."/>
            <person name="Tunggal B."/>
            <person name="Cox E.C."/>
            <person name="Quail M.A."/>
            <person name="Platzer M."/>
            <person name="Rosenthal A."/>
            <person name="Noegel A.A."/>
        </authorList>
    </citation>
    <scope>NUCLEOTIDE SEQUENCE [LARGE SCALE GENOMIC DNA]</scope>
    <source>
        <strain>AX4</strain>
    </source>
</reference>
<reference key="2">
    <citation type="journal article" date="2005" name="Nature">
        <title>The genome of the social amoeba Dictyostelium discoideum.</title>
        <authorList>
            <person name="Eichinger L."/>
            <person name="Pachebat J.A."/>
            <person name="Gloeckner G."/>
            <person name="Rajandream M.A."/>
            <person name="Sucgang R."/>
            <person name="Berriman M."/>
            <person name="Song J."/>
            <person name="Olsen R."/>
            <person name="Szafranski K."/>
            <person name="Xu Q."/>
            <person name="Tunggal B."/>
            <person name="Kummerfeld S."/>
            <person name="Madera M."/>
            <person name="Konfortov B.A."/>
            <person name="Rivero F."/>
            <person name="Bankier A.T."/>
            <person name="Lehmann R."/>
            <person name="Hamlin N."/>
            <person name="Davies R."/>
            <person name="Gaudet P."/>
            <person name="Fey P."/>
            <person name="Pilcher K."/>
            <person name="Chen G."/>
            <person name="Saunders D."/>
            <person name="Sodergren E.J."/>
            <person name="Davis P."/>
            <person name="Kerhornou A."/>
            <person name="Nie X."/>
            <person name="Hall N."/>
            <person name="Anjard C."/>
            <person name="Hemphill L."/>
            <person name="Bason N."/>
            <person name="Farbrother P."/>
            <person name="Desany B."/>
            <person name="Just E."/>
            <person name="Morio T."/>
            <person name="Rost R."/>
            <person name="Churcher C.M."/>
            <person name="Cooper J."/>
            <person name="Haydock S."/>
            <person name="van Driessche N."/>
            <person name="Cronin A."/>
            <person name="Goodhead I."/>
            <person name="Muzny D.M."/>
            <person name="Mourier T."/>
            <person name="Pain A."/>
            <person name="Lu M."/>
            <person name="Harper D."/>
            <person name="Lindsay R."/>
            <person name="Hauser H."/>
            <person name="James K.D."/>
            <person name="Quiles M."/>
            <person name="Madan Babu M."/>
            <person name="Saito T."/>
            <person name="Buchrieser C."/>
            <person name="Wardroper A."/>
            <person name="Felder M."/>
            <person name="Thangavelu M."/>
            <person name="Johnson D."/>
            <person name="Knights A."/>
            <person name="Loulseged H."/>
            <person name="Mungall K.L."/>
            <person name="Oliver K."/>
            <person name="Price C."/>
            <person name="Quail M.A."/>
            <person name="Urushihara H."/>
            <person name="Hernandez J."/>
            <person name="Rabbinowitsch E."/>
            <person name="Steffen D."/>
            <person name="Sanders M."/>
            <person name="Ma J."/>
            <person name="Kohara Y."/>
            <person name="Sharp S."/>
            <person name="Simmonds M.N."/>
            <person name="Spiegler S."/>
            <person name="Tivey A."/>
            <person name="Sugano S."/>
            <person name="White B."/>
            <person name="Walker D."/>
            <person name="Woodward J.R."/>
            <person name="Winckler T."/>
            <person name="Tanaka Y."/>
            <person name="Shaulsky G."/>
            <person name="Schleicher M."/>
            <person name="Weinstock G.M."/>
            <person name="Rosenthal A."/>
            <person name="Cox E.C."/>
            <person name="Chisholm R.L."/>
            <person name="Gibbs R.A."/>
            <person name="Loomis W.F."/>
            <person name="Platzer M."/>
            <person name="Kay R.R."/>
            <person name="Williams J.G."/>
            <person name="Dear P.H."/>
            <person name="Noegel A.A."/>
            <person name="Barrell B.G."/>
            <person name="Kuspa A."/>
        </authorList>
    </citation>
    <scope>NUCLEOTIDE SEQUENCE [LARGE SCALE GENOMIC DNA]</scope>
    <source>
        <strain>AX4</strain>
    </source>
</reference>
<feature type="chain" id="PRO_0000318830" description="Probable cytochrome P450 518A1">
    <location>
        <begin position="1"/>
        <end position="494"/>
    </location>
</feature>
<feature type="transmembrane region" description="Helical" evidence="2">
    <location>
        <begin position="1"/>
        <end position="21"/>
    </location>
</feature>
<feature type="binding site" description="axial binding residue" evidence="1">
    <location>
        <position position="438"/>
    </location>
    <ligand>
        <name>heme</name>
        <dbReference type="ChEBI" id="CHEBI:30413"/>
    </ligand>
    <ligandPart>
        <name>Fe</name>
        <dbReference type="ChEBI" id="CHEBI:18248"/>
    </ligandPart>
</feature>
<dbReference type="EC" id="1.14.-.-"/>
<dbReference type="EMBL" id="AAFI02000020">
    <property type="protein sequence ID" value="EAL68735.1"/>
    <property type="molecule type" value="Genomic_DNA"/>
</dbReference>
<dbReference type="RefSeq" id="XP_642618.1">
    <property type="nucleotide sequence ID" value="XM_637526.1"/>
</dbReference>
<dbReference type="SMR" id="Q54ZM4"/>
<dbReference type="FunCoup" id="Q54ZM4">
    <property type="interactions" value="12"/>
</dbReference>
<dbReference type="STRING" id="44689.Q54ZM4"/>
<dbReference type="PaxDb" id="44689-DDB0233017"/>
<dbReference type="EnsemblProtists" id="EAL68735">
    <property type="protein sequence ID" value="EAL68735"/>
    <property type="gene ID" value="DDB_G0277545"/>
</dbReference>
<dbReference type="GeneID" id="8621035"/>
<dbReference type="KEGG" id="ddi:DDB_G0277545"/>
<dbReference type="dictyBase" id="DDB_G0277545">
    <property type="gene designation" value="cyp518A1"/>
</dbReference>
<dbReference type="VEuPathDB" id="AmoebaDB:DDB_G0277545"/>
<dbReference type="eggNOG" id="KOG0156">
    <property type="taxonomic scope" value="Eukaryota"/>
</dbReference>
<dbReference type="HOGENOM" id="CLU_001570_22_0_1"/>
<dbReference type="InParanoid" id="Q54ZM4"/>
<dbReference type="OMA" id="VEECDIK"/>
<dbReference type="PhylomeDB" id="Q54ZM4"/>
<dbReference type="Reactome" id="R-DDI-211935">
    <property type="pathway name" value="Fatty acids"/>
</dbReference>
<dbReference type="Reactome" id="R-DDI-211945">
    <property type="pathway name" value="Phase I - Functionalization of compounds"/>
</dbReference>
<dbReference type="Reactome" id="R-DDI-211958">
    <property type="pathway name" value="Miscellaneous substrates"/>
</dbReference>
<dbReference type="Reactome" id="R-DDI-211981">
    <property type="pathway name" value="Xenobiotics"/>
</dbReference>
<dbReference type="Reactome" id="R-DDI-211999">
    <property type="pathway name" value="CYP2E1 reactions"/>
</dbReference>
<dbReference type="Reactome" id="R-DDI-2142670">
    <property type="pathway name" value="Synthesis of epoxy (EET) and dihydroxyeicosatrienoic acids (DHET)"/>
</dbReference>
<dbReference type="Reactome" id="R-DDI-2142816">
    <property type="pathway name" value="Synthesis of (16-20)-hydroxyeicosatetraenoic acids (HETE)"/>
</dbReference>
<dbReference type="Reactome" id="R-DDI-5423646">
    <property type="pathway name" value="Aflatoxin activation and detoxification"/>
</dbReference>
<dbReference type="Reactome" id="R-DDI-9027307">
    <property type="pathway name" value="Biosynthesis of maresin-like SPMs"/>
</dbReference>
<dbReference type="Reactome" id="R-DDI-9749641">
    <property type="pathway name" value="Aspirin ADME"/>
</dbReference>
<dbReference type="Reactome" id="R-DDI-9753281">
    <property type="pathway name" value="Paracetamol ADME"/>
</dbReference>
<dbReference type="PRO" id="PR:Q54ZM4"/>
<dbReference type="Proteomes" id="UP000002195">
    <property type="component" value="Chromosome 2"/>
</dbReference>
<dbReference type="GO" id="GO:0016020">
    <property type="term" value="C:membrane"/>
    <property type="evidence" value="ECO:0007669"/>
    <property type="project" value="UniProtKB-SubCell"/>
</dbReference>
<dbReference type="GO" id="GO:0020037">
    <property type="term" value="F:heme binding"/>
    <property type="evidence" value="ECO:0007669"/>
    <property type="project" value="InterPro"/>
</dbReference>
<dbReference type="GO" id="GO:0005506">
    <property type="term" value="F:iron ion binding"/>
    <property type="evidence" value="ECO:0007669"/>
    <property type="project" value="InterPro"/>
</dbReference>
<dbReference type="GO" id="GO:0004497">
    <property type="term" value="F:monooxygenase activity"/>
    <property type="evidence" value="ECO:0007669"/>
    <property type="project" value="UniProtKB-KW"/>
</dbReference>
<dbReference type="GO" id="GO:0016705">
    <property type="term" value="F:oxidoreductase activity, acting on paired donors, with incorporation or reduction of molecular oxygen"/>
    <property type="evidence" value="ECO:0007669"/>
    <property type="project" value="InterPro"/>
</dbReference>
<dbReference type="CDD" id="cd20617">
    <property type="entry name" value="CYP1_2-like"/>
    <property type="match status" value="1"/>
</dbReference>
<dbReference type="FunFam" id="1.10.630.10:FF:000068">
    <property type="entry name" value="Probable cytochrome P450 508A2"/>
    <property type="match status" value="1"/>
</dbReference>
<dbReference type="Gene3D" id="1.10.630.10">
    <property type="entry name" value="Cytochrome P450"/>
    <property type="match status" value="1"/>
</dbReference>
<dbReference type="InterPro" id="IPR001128">
    <property type="entry name" value="Cyt_P450"/>
</dbReference>
<dbReference type="InterPro" id="IPR002401">
    <property type="entry name" value="Cyt_P450_E_grp-I"/>
</dbReference>
<dbReference type="InterPro" id="IPR036396">
    <property type="entry name" value="Cyt_P450_sf"/>
</dbReference>
<dbReference type="InterPro" id="IPR050182">
    <property type="entry name" value="Cytochrome_P450_fam2"/>
</dbReference>
<dbReference type="PANTHER" id="PTHR24300">
    <property type="entry name" value="CYTOCHROME P450 508A4-RELATED"/>
    <property type="match status" value="1"/>
</dbReference>
<dbReference type="PANTHER" id="PTHR24300:SF88">
    <property type="entry name" value="CYTOCHROME P450 518A1-RELATED"/>
    <property type="match status" value="1"/>
</dbReference>
<dbReference type="Pfam" id="PF00067">
    <property type="entry name" value="p450"/>
    <property type="match status" value="1"/>
</dbReference>
<dbReference type="PRINTS" id="PR00463">
    <property type="entry name" value="EP450I"/>
</dbReference>
<dbReference type="PRINTS" id="PR00385">
    <property type="entry name" value="P450"/>
</dbReference>
<dbReference type="SUPFAM" id="SSF48264">
    <property type="entry name" value="Cytochrome P450"/>
    <property type="match status" value="1"/>
</dbReference>
<proteinExistence type="inferred from homology"/>
<gene>
    <name type="primary">cyp518A1</name>
    <name type="ORF">DDB_G0277545</name>
</gene>
<protein>
    <recommendedName>
        <fullName>Probable cytochrome P450 518A1</fullName>
        <ecNumber>1.14.-.-</ecNumber>
    </recommendedName>
</protein>
<name>C518A_DICDI</name>